<accession>Q9YGI2</accession>
<reference key="1">
    <citation type="journal article" date="1998" name="Biochim. Biophys. Acta">
        <title>cDNA sequence analysis and expression of four long neurotoxin homologues from Naja naja atra.</title>
        <authorList>
            <person name="Qian Y.-C."/>
            <person name="Fan C.-Y."/>
            <person name="Gong Y."/>
            <person name="Yang S.-L."/>
        </authorList>
    </citation>
    <scope>NUCLEOTIDE SEQUENCE [MRNA]</scope>
    <source>
        <tissue>Venom gland</tissue>
    </source>
</reference>
<name>3NO21_NAJAT</name>
<keyword id="KW-0008">Acetylcholine receptor inhibiting toxin</keyword>
<keyword id="KW-1015">Disulfide bond</keyword>
<keyword id="KW-0872">Ion channel impairing toxin</keyword>
<keyword id="KW-0528">Neurotoxin</keyword>
<keyword id="KW-0629">Postsynaptic neurotoxin</keyword>
<keyword id="KW-0964">Secreted</keyword>
<keyword id="KW-0732">Signal</keyword>
<keyword id="KW-0800">Toxin</keyword>
<comment type="function">
    <text evidence="2">Binds with low affinity to muscular (alpha-1-beta-1-delta-epsilon/CHRNA1-CHRNB1-CHRND-CHRNE) and very low affinity to neuronal (alpha-7/CHRNA7) nicotinic acetylcholine receptor (nAChR).</text>
</comment>
<comment type="subcellular location">
    <subcellularLocation>
        <location evidence="1">Secreted</location>
    </subcellularLocation>
</comment>
<comment type="tissue specificity">
    <text evidence="5">Expressed by the venom gland.</text>
</comment>
<comment type="similarity">
    <text evidence="5">Belongs to the three-finger toxin family. Ancestral subfamily. Orphan group II sub-subfamily.</text>
</comment>
<dbReference type="EMBL" id="AJ223154">
    <property type="protein sequence ID" value="CAA11133.1"/>
    <property type="molecule type" value="mRNA"/>
</dbReference>
<dbReference type="SMR" id="Q9YGI2"/>
<dbReference type="GO" id="GO:0005576">
    <property type="term" value="C:extracellular region"/>
    <property type="evidence" value="ECO:0007669"/>
    <property type="project" value="UniProtKB-SubCell"/>
</dbReference>
<dbReference type="GO" id="GO:0030550">
    <property type="term" value="F:acetylcholine receptor inhibitor activity"/>
    <property type="evidence" value="ECO:0007669"/>
    <property type="project" value="UniProtKB-KW"/>
</dbReference>
<dbReference type="GO" id="GO:0099106">
    <property type="term" value="F:ion channel regulator activity"/>
    <property type="evidence" value="ECO:0007669"/>
    <property type="project" value="UniProtKB-KW"/>
</dbReference>
<dbReference type="GO" id="GO:0090729">
    <property type="term" value="F:toxin activity"/>
    <property type="evidence" value="ECO:0007669"/>
    <property type="project" value="UniProtKB-KW"/>
</dbReference>
<dbReference type="CDD" id="cd00206">
    <property type="entry name" value="TFP_snake_toxin"/>
    <property type="match status" value="1"/>
</dbReference>
<dbReference type="FunFam" id="2.10.60.10:FF:000024">
    <property type="entry name" value="Cytotoxin 1"/>
    <property type="match status" value="1"/>
</dbReference>
<dbReference type="Gene3D" id="2.10.60.10">
    <property type="entry name" value="CD59"/>
    <property type="match status" value="1"/>
</dbReference>
<dbReference type="InterPro" id="IPR003571">
    <property type="entry name" value="Snake_3FTx"/>
</dbReference>
<dbReference type="InterPro" id="IPR045860">
    <property type="entry name" value="Snake_toxin-like_sf"/>
</dbReference>
<dbReference type="InterPro" id="IPR018354">
    <property type="entry name" value="Snake_toxin_con_site"/>
</dbReference>
<dbReference type="InterPro" id="IPR054131">
    <property type="entry name" value="Toxin_cobra-type"/>
</dbReference>
<dbReference type="Pfam" id="PF21947">
    <property type="entry name" value="Toxin_cobra-type"/>
    <property type="match status" value="1"/>
</dbReference>
<dbReference type="SUPFAM" id="SSF57302">
    <property type="entry name" value="Snake toxin-like"/>
    <property type="match status" value="1"/>
</dbReference>
<dbReference type="PROSITE" id="PS00272">
    <property type="entry name" value="SNAKE_TOXIN"/>
    <property type="match status" value="1"/>
</dbReference>
<feature type="signal peptide" evidence="4">
    <location>
        <begin position="1"/>
        <end position="21"/>
    </location>
</feature>
<feature type="chain" id="PRO_0000035468" description="Probable weak neurotoxin NNAM1">
    <location>
        <begin position="22"/>
        <end position="86"/>
    </location>
</feature>
<feature type="disulfide bond" evidence="3">
    <location>
        <begin position="24"/>
        <end position="45"/>
    </location>
</feature>
<feature type="disulfide bond" evidence="3">
    <location>
        <begin position="27"/>
        <end position="32"/>
    </location>
</feature>
<feature type="disulfide bond" evidence="3">
    <location>
        <begin position="38"/>
        <end position="63"/>
    </location>
</feature>
<feature type="disulfide bond" evidence="3">
    <location>
        <begin position="67"/>
        <end position="78"/>
    </location>
</feature>
<feature type="disulfide bond" evidence="3">
    <location>
        <begin position="79"/>
        <end position="84"/>
    </location>
</feature>
<sequence>MKTLLLSLVVVTIVCLDLGYTLTCLICPEKYCNKVHTCLNGEKICFKKYDQRKLLGKRYIRGCADTCPVRKPREIVECCSTDKCNH</sequence>
<evidence type="ECO:0000250" key="1"/>
<evidence type="ECO:0000250" key="2">
    <source>
        <dbReference type="UniProtKB" id="O42255"/>
    </source>
</evidence>
<evidence type="ECO:0000250" key="3">
    <source>
        <dbReference type="UniProtKB" id="Q8AY51"/>
    </source>
</evidence>
<evidence type="ECO:0000255" key="4"/>
<evidence type="ECO:0000305" key="5"/>
<proteinExistence type="inferred from homology"/>
<protein>
    <recommendedName>
        <fullName>Probable weak neurotoxin NNAM1</fullName>
    </recommendedName>
</protein>
<organism>
    <name type="scientific">Naja atra</name>
    <name type="common">Chinese cobra</name>
    <dbReference type="NCBI Taxonomy" id="8656"/>
    <lineage>
        <taxon>Eukaryota</taxon>
        <taxon>Metazoa</taxon>
        <taxon>Chordata</taxon>
        <taxon>Craniata</taxon>
        <taxon>Vertebrata</taxon>
        <taxon>Euteleostomi</taxon>
        <taxon>Lepidosauria</taxon>
        <taxon>Squamata</taxon>
        <taxon>Bifurcata</taxon>
        <taxon>Unidentata</taxon>
        <taxon>Episquamata</taxon>
        <taxon>Toxicofera</taxon>
        <taxon>Serpentes</taxon>
        <taxon>Colubroidea</taxon>
        <taxon>Elapidae</taxon>
        <taxon>Elapinae</taxon>
        <taxon>Naja</taxon>
    </lineage>
</organism>